<gene>
    <name evidence="1" type="primary">yraN</name>
    <name type="ordered locus">SBO_3234</name>
</gene>
<organism>
    <name type="scientific">Shigella boydii serotype 4 (strain Sb227)</name>
    <dbReference type="NCBI Taxonomy" id="300268"/>
    <lineage>
        <taxon>Bacteria</taxon>
        <taxon>Pseudomonadati</taxon>
        <taxon>Pseudomonadota</taxon>
        <taxon>Gammaproteobacteria</taxon>
        <taxon>Enterobacterales</taxon>
        <taxon>Enterobacteriaceae</taxon>
        <taxon>Shigella</taxon>
    </lineage>
</organism>
<accession>Q31W27</accession>
<reference key="1">
    <citation type="journal article" date="2005" name="Nucleic Acids Res.">
        <title>Genome dynamics and diversity of Shigella species, the etiologic agents of bacillary dysentery.</title>
        <authorList>
            <person name="Yang F."/>
            <person name="Yang J."/>
            <person name="Zhang X."/>
            <person name="Chen L."/>
            <person name="Jiang Y."/>
            <person name="Yan Y."/>
            <person name="Tang X."/>
            <person name="Wang J."/>
            <person name="Xiong Z."/>
            <person name="Dong J."/>
            <person name="Xue Y."/>
            <person name="Zhu Y."/>
            <person name="Xu X."/>
            <person name="Sun L."/>
            <person name="Chen S."/>
            <person name="Nie H."/>
            <person name="Peng J."/>
            <person name="Xu J."/>
            <person name="Wang Y."/>
            <person name="Yuan Z."/>
            <person name="Wen Y."/>
            <person name="Yao Z."/>
            <person name="Shen Y."/>
            <person name="Qiang B."/>
            <person name="Hou Y."/>
            <person name="Yu J."/>
            <person name="Jin Q."/>
        </authorList>
    </citation>
    <scope>NUCLEOTIDE SEQUENCE [LARGE SCALE GENOMIC DNA]</scope>
    <source>
        <strain>Sb227</strain>
    </source>
</reference>
<proteinExistence type="inferred from homology"/>
<comment type="similarity">
    <text evidence="1">Belongs to the UPF0102 family.</text>
</comment>
<sequence length="131" mass="14828">MATVPTRSGSPRQLTTKQTGDAWEVQARRWLEGKGLRFVAANVNERGGEIDLIMREGWTTVFVEVRYRRSALYGGAAASVTRSKQHKLLQTARLWLARHNGSFDTVDCRFDVVAFTGNEVEWIKDAFNDHS</sequence>
<protein>
    <recommendedName>
        <fullName evidence="1">UPF0102 protein YraN</fullName>
    </recommendedName>
</protein>
<name>YRAN_SHIBS</name>
<evidence type="ECO:0000255" key="1">
    <source>
        <dbReference type="HAMAP-Rule" id="MF_00048"/>
    </source>
</evidence>
<evidence type="ECO:0000256" key="2">
    <source>
        <dbReference type="SAM" id="MobiDB-lite"/>
    </source>
</evidence>
<dbReference type="EMBL" id="CP000036">
    <property type="protein sequence ID" value="ABB67731.1"/>
    <property type="molecule type" value="Genomic_DNA"/>
</dbReference>
<dbReference type="RefSeq" id="WP_000246860.1">
    <property type="nucleotide sequence ID" value="NC_007613.1"/>
</dbReference>
<dbReference type="SMR" id="Q31W27"/>
<dbReference type="KEGG" id="sbo:SBO_3234"/>
<dbReference type="HOGENOM" id="CLU_115353_1_0_6"/>
<dbReference type="Proteomes" id="UP000007067">
    <property type="component" value="Chromosome"/>
</dbReference>
<dbReference type="GO" id="GO:0003676">
    <property type="term" value="F:nucleic acid binding"/>
    <property type="evidence" value="ECO:0007669"/>
    <property type="project" value="InterPro"/>
</dbReference>
<dbReference type="Gene3D" id="3.40.1350.10">
    <property type="match status" value="1"/>
</dbReference>
<dbReference type="HAMAP" id="MF_00048">
    <property type="entry name" value="UPF0102"/>
    <property type="match status" value="1"/>
</dbReference>
<dbReference type="InterPro" id="IPR011335">
    <property type="entry name" value="Restrct_endonuc-II-like"/>
</dbReference>
<dbReference type="InterPro" id="IPR011856">
    <property type="entry name" value="tRNA_endonuc-like_dom_sf"/>
</dbReference>
<dbReference type="InterPro" id="IPR003509">
    <property type="entry name" value="UPF0102_YraN-like"/>
</dbReference>
<dbReference type="NCBIfam" id="NF009150">
    <property type="entry name" value="PRK12497.1-3"/>
    <property type="match status" value="1"/>
</dbReference>
<dbReference type="NCBIfam" id="TIGR00252">
    <property type="entry name" value="YraN family protein"/>
    <property type="match status" value="1"/>
</dbReference>
<dbReference type="PANTHER" id="PTHR34039">
    <property type="entry name" value="UPF0102 PROTEIN YRAN"/>
    <property type="match status" value="1"/>
</dbReference>
<dbReference type="PANTHER" id="PTHR34039:SF1">
    <property type="entry name" value="UPF0102 PROTEIN YRAN"/>
    <property type="match status" value="1"/>
</dbReference>
<dbReference type="Pfam" id="PF02021">
    <property type="entry name" value="UPF0102"/>
    <property type="match status" value="1"/>
</dbReference>
<dbReference type="SUPFAM" id="SSF52980">
    <property type="entry name" value="Restriction endonuclease-like"/>
    <property type="match status" value="1"/>
</dbReference>
<feature type="chain" id="PRO_1000009265" description="UPF0102 protein YraN">
    <location>
        <begin position="1"/>
        <end position="131"/>
    </location>
</feature>
<feature type="region of interest" description="Disordered" evidence="2">
    <location>
        <begin position="1"/>
        <end position="20"/>
    </location>
</feature>
<feature type="compositionally biased region" description="Polar residues" evidence="2">
    <location>
        <begin position="1"/>
        <end position="19"/>
    </location>
</feature>